<keyword id="KW-0256">Endoplasmic reticulum</keyword>
<keyword id="KW-0275">Fatty acid biosynthesis</keyword>
<keyword id="KW-0276">Fatty acid metabolism</keyword>
<keyword id="KW-0408">Iron</keyword>
<keyword id="KW-0444">Lipid biosynthesis</keyword>
<keyword id="KW-0443">Lipid metabolism</keyword>
<keyword id="KW-0472">Membrane</keyword>
<keyword id="KW-0479">Metal-binding</keyword>
<keyword id="KW-0560">Oxidoreductase</keyword>
<keyword id="KW-0597">Phosphoprotein</keyword>
<keyword id="KW-1185">Reference proteome</keyword>
<keyword id="KW-0812">Transmembrane</keyword>
<keyword id="KW-1133">Transmembrane helix</keyword>
<proteinExistence type="evidence at transcript level"/>
<dbReference type="EC" id="1.14.19.1" evidence="2"/>
<dbReference type="EMBL" id="AF339909">
    <property type="protein sequence ID" value="AAK61862.1"/>
    <property type="molecule type" value="mRNA"/>
</dbReference>
<dbReference type="EMBL" id="AF422171">
    <property type="protein sequence ID" value="AAL29305.1"/>
    <property type="molecule type" value="Genomic_DNA"/>
</dbReference>
<dbReference type="EMBL" id="AF422167">
    <property type="protein sequence ID" value="AAL29305.1"/>
    <property type="status" value="JOINED"/>
    <property type="molecule type" value="Genomic_DNA"/>
</dbReference>
<dbReference type="EMBL" id="AF422166">
    <property type="protein sequence ID" value="AAL29305.1"/>
    <property type="status" value="JOINED"/>
    <property type="molecule type" value="Genomic_DNA"/>
</dbReference>
<dbReference type="EMBL" id="AF422168">
    <property type="protein sequence ID" value="AAL29305.1"/>
    <property type="status" value="JOINED"/>
    <property type="molecule type" value="Genomic_DNA"/>
</dbReference>
<dbReference type="EMBL" id="AF422170">
    <property type="protein sequence ID" value="AAL29305.1"/>
    <property type="status" value="JOINED"/>
    <property type="molecule type" value="Genomic_DNA"/>
</dbReference>
<dbReference type="EMBL" id="AF422169">
    <property type="protein sequence ID" value="AAL29305.1"/>
    <property type="status" value="JOINED"/>
    <property type="molecule type" value="Genomic_DNA"/>
</dbReference>
<dbReference type="SMR" id="Q95MI7"/>
<dbReference type="STRING" id="9925.ENSCHIP00000023844"/>
<dbReference type="Proteomes" id="UP000291000">
    <property type="component" value="Unassembled WGS sequence"/>
</dbReference>
<dbReference type="Proteomes" id="UP000694566">
    <property type="component" value="Unplaced"/>
</dbReference>
<dbReference type="GO" id="GO:0005789">
    <property type="term" value="C:endoplasmic reticulum membrane"/>
    <property type="evidence" value="ECO:0000250"/>
    <property type="project" value="UniProtKB"/>
</dbReference>
<dbReference type="GO" id="GO:0016020">
    <property type="term" value="C:membrane"/>
    <property type="evidence" value="ECO:0000250"/>
    <property type="project" value="UniProtKB"/>
</dbReference>
<dbReference type="GO" id="GO:0005506">
    <property type="term" value="F:iron ion binding"/>
    <property type="evidence" value="ECO:0000250"/>
    <property type="project" value="UniProtKB"/>
</dbReference>
<dbReference type="GO" id="GO:0016491">
    <property type="term" value="F:oxidoreductase activity"/>
    <property type="evidence" value="ECO:0000250"/>
    <property type="project" value="UniProtKB"/>
</dbReference>
<dbReference type="GO" id="GO:0032896">
    <property type="term" value="F:palmitoyl-CoA 9-desaturase activity"/>
    <property type="evidence" value="ECO:0007669"/>
    <property type="project" value="TreeGrafter"/>
</dbReference>
<dbReference type="GO" id="GO:0004768">
    <property type="term" value="F:stearoyl-CoA 9-desaturase activity"/>
    <property type="evidence" value="ECO:0000250"/>
    <property type="project" value="UniProtKB"/>
</dbReference>
<dbReference type="GO" id="GO:1903966">
    <property type="term" value="P:monounsaturated fatty acid biosynthetic process"/>
    <property type="evidence" value="ECO:0007669"/>
    <property type="project" value="TreeGrafter"/>
</dbReference>
<dbReference type="GO" id="GO:0070542">
    <property type="term" value="P:response to fatty acid"/>
    <property type="evidence" value="ECO:0007669"/>
    <property type="project" value="TreeGrafter"/>
</dbReference>
<dbReference type="GO" id="GO:0006636">
    <property type="term" value="P:unsaturated fatty acid biosynthetic process"/>
    <property type="evidence" value="ECO:0000250"/>
    <property type="project" value="UniProtKB"/>
</dbReference>
<dbReference type="CDD" id="cd03505">
    <property type="entry name" value="Delta9-FADS-like"/>
    <property type="match status" value="1"/>
</dbReference>
<dbReference type="InterPro" id="IPR015876">
    <property type="entry name" value="Acyl-CoA_DS"/>
</dbReference>
<dbReference type="InterPro" id="IPR001522">
    <property type="entry name" value="FADS-1_CS"/>
</dbReference>
<dbReference type="PANTHER" id="PTHR11351">
    <property type="entry name" value="ACYL-COA DESATURASE"/>
    <property type="match status" value="1"/>
</dbReference>
<dbReference type="PANTHER" id="PTHR11351:SF102">
    <property type="entry name" value="STEAROYL-COA DESATURASE"/>
    <property type="match status" value="1"/>
</dbReference>
<dbReference type="PRINTS" id="PR00075">
    <property type="entry name" value="FACDDSATRASE"/>
</dbReference>
<dbReference type="PROSITE" id="PS00476">
    <property type="entry name" value="FATTY_ACID_DESATUR_1"/>
    <property type="match status" value="1"/>
</dbReference>
<name>SCD_CAPHI</name>
<organism>
    <name type="scientific">Capra hircus</name>
    <name type="common">Goat</name>
    <dbReference type="NCBI Taxonomy" id="9925"/>
    <lineage>
        <taxon>Eukaryota</taxon>
        <taxon>Metazoa</taxon>
        <taxon>Chordata</taxon>
        <taxon>Craniata</taxon>
        <taxon>Vertebrata</taxon>
        <taxon>Euteleostomi</taxon>
        <taxon>Mammalia</taxon>
        <taxon>Eutheria</taxon>
        <taxon>Laurasiatheria</taxon>
        <taxon>Artiodactyla</taxon>
        <taxon>Ruminantia</taxon>
        <taxon>Pecora</taxon>
        <taxon>Bovidae</taxon>
        <taxon>Caprinae</taxon>
        <taxon>Capra</taxon>
    </lineage>
</organism>
<comment type="function">
    <text evidence="2">Stearoyl-CoA desaturase that utilizes O(2) and electrons from reduced cytochrome b5 to introduce the first double bond into saturated fatty acyl-CoA substrates. Catalyzes the insertion of a cis double bond at the delta-9 position into fatty acyl-CoA substrates including palmitoyl-CoA and stearoyl-CoA (By similarity). Gives rise to a mixture of 16:1 and 18:1 unsaturated fatty acids. Plays an important role in lipid biosynthesis. Plays an important role in regulating the expression of genes that are involved in lipogenesis and in regulating mitochondrial fatty acid oxidation (By similarity). Plays an important role in body energy homeostasis (By similarity). Contributes to the biosynthesis of membrane phospholipids, cholesterol esters and triglycerides (By similarity).</text>
</comment>
<comment type="catalytic activity">
    <reaction evidence="2">
        <text>octadecanoyl-CoA + 2 Fe(II)-[cytochrome b5] + O2 + 2 H(+) = (9Z)-octadecenoyl-CoA + 2 Fe(III)-[cytochrome b5] + 2 H2O</text>
        <dbReference type="Rhea" id="RHEA:19721"/>
        <dbReference type="Rhea" id="RHEA-COMP:10438"/>
        <dbReference type="Rhea" id="RHEA-COMP:10439"/>
        <dbReference type="ChEBI" id="CHEBI:15377"/>
        <dbReference type="ChEBI" id="CHEBI:15378"/>
        <dbReference type="ChEBI" id="CHEBI:15379"/>
        <dbReference type="ChEBI" id="CHEBI:29033"/>
        <dbReference type="ChEBI" id="CHEBI:29034"/>
        <dbReference type="ChEBI" id="CHEBI:57387"/>
        <dbReference type="ChEBI" id="CHEBI:57394"/>
        <dbReference type="EC" id="1.14.19.1"/>
    </reaction>
</comment>
<comment type="catalytic activity">
    <reaction evidence="1">
        <text>hexadecanoyl-CoA + 2 Fe(II)-[cytochrome b5] + O2 + 2 H(+) = (9Z)-hexadecenoyl-CoA + 2 Fe(III)-[cytochrome b5] + 2 H2O</text>
        <dbReference type="Rhea" id="RHEA:36931"/>
        <dbReference type="Rhea" id="RHEA-COMP:10438"/>
        <dbReference type="Rhea" id="RHEA-COMP:10439"/>
        <dbReference type="ChEBI" id="CHEBI:15377"/>
        <dbReference type="ChEBI" id="CHEBI:15378"/>
        <dbReference type="ChEBI" id="CHEBI:15379"/>
        <dbReference type="ChEBI" id="CHEBI:29033"/>
        <dbReference type="ChEBI" id="CHEBI:29034"/>
        <dbReference type="ChEBI" id="CHEBI:57379"/>
        <dbReference type="ChEBI" id="CHEBI:61540"/>
    </reaction>
</comment>
<comment type="cofactor">
    <cofactor evidence="2">
        <name>Fe(2+)</name>
        <dbReference type="ChEBI" id="CHEBI:29033"/>
    </cofactor>
    <text evidence="2">Expected to bind 2 Fe(2+) ions per subunit.</text>
</comment>
<comment type="subcellular location">
    <subcellularLocation>
        <location evidence="2">Endoplasmic reticulum membrane</location>
        <topology evidence="3">Multi-pass membrane protein</topology>
    </subcellularLocation>
</comment>
<comment type="domain">
    <text evidence="1">The histidine box domains are involved in binding the catalytic metal ions.</text>
</comment>
<comment type="similarity">
    <text evidence="3">Belongs to the fatty acid desaturase type 1 family.</text>
</comment>
<accession>Q95MI7</accession>
<reference key="1">
    <citation type="journal article" date="2002" name="J. Anim. Sci.">
        <title>Partial nucleotide sequence of the goat stearoyl coenzyme A desaturase cDNA and gene structure.</title>
        <authorList>
            <person name="Yahyaoui M.H."/>
            <person name="Sanchez A."/>
            <person name="Folch J.M."/>
        </authorList>
    </citation>
    <scope>NUCLEOTIDE SEQUENCE [GENOMIC DNA / MRNA]</scope>
</reference>
<sequence length="359" mass="41586">MPAHLLQEEISSSYTTTTTITAPPSKVLQNGGGKLEKTPLYLEEDIRPEMRDDIYDPTYQDKEGPKPKLEYVWRNIILMGLLHLGALYGITLIPTCKIYTFLWVLFYYMMSALGITAGVHRLWSHRTYKARLPLRVFLIIANTMAFQNDVFEWSRDHRAHHKFSETDADPHNSRRGFFFSHVGWLLVRKHPAVREKGATLDLSDLRAEKLVMFQRRYYKPGVLLLCFILPTLVPWYLWGETFQNSLFFATLLRYAVVLNATWLVNSAAHMYGYRPYDKTINPRENILVSLGAVGEGFHNYHHTFPYDYSASEYRWHINFTTFFIDCMAAIGLAYDRKKVSKAAALARMKRTGEESCKSG</sequence>
<gene>
    <name type="primary">SCD</name>
</gene>
<feature type="chain" id="PRO_0000232709" description="Stearoyl-CoA desaturase">
    <location>
        <begin position="1"/>
        <end position="359"/>
    </location>
</feature>
<feature type="topological domain" description="Cytoplasmic" evidence="1">
    <location>
        <begin position="1"/>
        <end position="72"/>
    </location>
</feature>
<feature type="transmembrane region" description="Helical" evidence="1">
    <location>
        <begin position="73"/>
        <end position="93"/>
    </location>
</feature>
<feature type="topological domain" description="Lumenal" evidence="1">
    <location>
        <begin position="94"/>
        <end position="97"/>
    </location>
</feature>
<feature type="transmembrane region" description="Helical" evidence="1">
    <location>
        <begin position="98"/>
        <end position="118"/>
    </location>
</feature>
<feature type="topological domain" description="Cytoplasmic" evidence="1">
    <location>
        <begin position="119"/>
        <end position="217"/>
    </location>
</feature>
<feature type="transmembrane region" description="Helical" evidence="1">
    <location>
        <begin position="218"/>
        <end position="237"/>
    </location>
</feature>
<feature type="topological domain" description="Lumenal" evidence="1">
    <location>
        <begin position="238"/>
        <end position="241"/>
    </location>
</feature>
<feature type="transmembrane region" description="Helical" evidence="1">
    <location>
        <begin position="242"/>
        <end position="263"/>
    </location>
</feature>
<feature type="topological domain" description="Cytoplasmic" evidence="1">
    <location>
        <begin position="264"/>
        <end position="359"/>
    </location>
</feature>
<feature type="short sequence motif" description="Histidine box-1" evidence="3">
    <location>
        <begin position="120"/>
        <end position="125"/>
    </location>
</feature>
<feature type="short sequence motif" description="Histidine box-2" evidence="3">
    <location>
        <begin position="157"/>
        <end position="161"/>
    </location>
</feature>
<feature type="short sequence motif" description="Histidine box-3" evidence="3">
    <location>
        <begin position="298"/>
        <end position="302"/>
    </location>
</feature>
<feature type="binding site" evidence="1">
    <location>
        <position position="75"/>
    </location>
    <ligand>
        <name>substrate</name>
    </ligand>
</feature>
<feature type="binding site" evidence="2">
    <location>
        <position position="120"/>
    </location>
    <ligand>
        <name>Fe cation</name>
        <dbReference type="ChEBI" id="CHEBI:24875"/>
        <label>1</label>
    </ligand>
</feature>
<feature type="binding site" evidence="2">
    <location>
        <position position="125"/>
    </location>
    <ligand>
        <name>Fe cation</name>
        <dbReference type="ChEBI" id="CHEBI:24875"/>
        <label>1</label>
    </ligand>
</feature>
<feature type="binding site" evidence="1">
    <location>
        <position position="148"/>
    </location>
    <ligand>
        <name>substrate</name>
    </ligand>
</feature>
<feature type="binding site" evidence="1">
    <location>
        <position position="155"/>
    </location>
    <ligand>
        <name>substrate</name>
    </ligand>
</feature>
<feature type="binding site" evidence="1">
    <location>
        <position position="156"/>
    </location>
    <ligand>
        <name>substrate</name>
    </ligand>
</feature>
<feature type="binding site" evidence="2">
    <location>
        <position position="157"/>
    </location>
    <ligand>
        <name>Fe cation</name>
        <dbReference type="ChEBI" id="CHEBI:24875"/>
        <label>1</label>
    </ligand>
</feature>
<feature type="binding site" evidence="2">
    <location>
        <position position="160"/>
    </location>
    <ligand>
        <name>Fe cation</name>
        <dbReference type="ChEBI" id="CHEBI:24875"/>
        <label>2</label>
    </ligand>
</feature>
<feature type="binding site" evidence="2">
    <location>
        <position position="161"/>
    </location>
    <ligand>
        <name>Fe cation</name>
        <dbReference type="ChEBI" id="CHEBI:24875"/>
        <label>1</label>
    </ligand>
</feature>
<feature type="binding site" evidence="1">
    <location>
        <position position="188"/>
    </location>
    <ligand>
        <name>substrate</name>
    </ligand>
</feature>
<feature type="binding site" evidence="1">
    <location>
        <position position="189"/>
    </location>
    <ligand>
        <name>substrate</name>
    </ligand>
</feature>
<feature type="binding site" evidence="1">
    <location>
        <position position="262"/>
    </location>
    <ligand>
        <name>substrate</name>
    </ligand>
</feature>
<feature type="binding site" evidence="2">
    <location>
        <position position="269"/>
    </location>
    <ligand>
        <name>Fe cation</name>
        <dbReference type="ChEBI" id="CHEBI:24875"/>
        <label>2</label>
    </ligand>
</feature>
<feature type="binding site" evidence="2">
    <location>
        <position position="298"/>
    </location>
    <ligand>
        <name>Fe cation</name>
        <dbReference type="ChEBI" id="CHEBI:24875"/>
        <label>2</label>
    </ligand>
</feature>
<feature type="binding site" evidence="2">
    <location>
        <position position="301"/>
    </location>
    <ligand>
        <name>Fe cation</name>
        <dbReference type="ChEBI" id="CHEBI:24875"/>
        <label>1</label>
    </ligand>
</feature>
<feature type="binding site" evidence="2">
    <location>
        <position position="302"/>
    </location>
    <ligand>
        <name>Fe cation</name>
        <dbReference type="ChEBI" id="CHEBI:24875"/>
        <label>2</label>
    </ligand>
</feature>
<feature type="modified residue" description="Phosphoserine" evidence="1">
    <location>
        <position position="203"/>
    </location>
</feature>
<evidence type="ECO:0000250" key="1">
    <source>
        <dbReference type="UniProtKB" id="O00767"/>
    </source>
</evidence>
<evidence type="ECO:0000250" key="2">
    <source>
        <dbReference type="UniProtKB" id="P13516"/>
    </source>
</evidence>
<evidence type="ECO:0000305" key="3"/>
<protein>
    <recommendedName>
        <fullName>Stearoyl-CoA desaturase</fullName>
        <ecNumber evidence="2">1.14.19.1</ecNumber>
    </recommendedName>
    <alternativeName>
        <fullName>Acyl-CoA desaturase</fullName>
    </alternativeName>
    <alternativeName>
        <fullName>Delta(9)-desaturase</fullName>
        <shortName>Delta-9 desaturase</shortName>
    </alternativeName>
    <alternativeName>
        <fullName>Fatty acid desaturase</fullName>
    </alternativeName>
</protein>